<protein>
    <recommendedName>
        <fullName evidence="1">Enolase</fullName>
        <ecNumber evidence="1">4.2.1.11</ecNumber>
    </recommendedName>
    <alternativeName>
        <fullName evidence="1">2-phospho-D-glycerate hydro-lyase</fullName>
    </alternativeName>
    <alternativeName>
        <fullName evidence="1">2-phosphoglycerate dehydratase</fullName>
    </alternativeName>
</protein>
<comment type="function">
    <text evidence="1">Catalyzes the reversible conversion of 2-phosphoglycerate (2-PG) into phosphoenolpyruvate (PEP). It is essential for the degradation of carbohydrates via glycolysis.</text>
</comment>
<comment type="catalytic activity">
    <reaction evidence="1">
        <text>(2R)-2-phosphoglycerate = phosphoenolpyruvate + H2O</text>
        <dbReference type="Rhea" id="RHEA:10164"/>
        <dbReference type="ChEBI" id="CHEBI:15377"/>
        <dbReference type="ChEBI" id="CHEBI:58289"/>
        <dbReference type="ChEBI" id="CHEBI:58702"/>
        <dbReference type="EC" id="4.2.1.11"/>
    </reaction>
</comment>
<comment type="cofactor">
    <cofactor evidence="1">
        <name>Mg(2+)</name>
        <dbReference type="ChEBI" id="CHEBI:18420"/>
    </cofactor>
    <text evidence="1">Binds a second Mg(2+) ion via substrate during catalysis.</text>
</comment>
<comment type="pathway">
    <text evidence="1">Carbohydrate degradation; glycolysis; pyruvate from D-glyceraldehyde 3-phosphate: step 4/5.</text>
</comment>
<comment type="subcellular location">
    <subcellularLocation>
        <location evidence="1">Cytoplasm</location>
    </subcellularLocation>
    <subcellularLocation>
        <location evidence="1">Secreted</location>
    </subcellularLocation>
    <subcellularLocation>
        <location evidence="1">Cell surface</location>
    </subcellularLocation>
    <text evidence="1">Fractions of enolase are present in both the cytoplasm and on the cell surface.</text>
</comment>
<comment type="similarity">
    <text evidence="1">Belongs to the enolase family.</text>
</comment>
<accession>B8I4U1</accession>
<proteinExistence type="inferred from homology"/>
<organism>
    <name type="scientific">Ruminiclostridium cellulolyticum (strain ATCC 35319 / DSM 5812 / JCM 6584 / H10)</name>
    <name type="common">Clostridium cellulolyticum</name>
    <dbReference type="NCBI Taxonomy" id="394503"/>
    <lineage>
        <taxon>Bacteria</taxon>
        <taxon>Bacillati</taxon>
        <taxon>Bacillota</taxon>
        <taxon>Clostridia</taxon>
        <taxon>Eubacteriales</taxon>
        <taxon>Oscillospiraceae</taxon>
        <taxon>Ruminiclostridium</taxon>
    </lineage>
</organism>
<evidence type="ECO:0000255" key="1">
    <source>
        <dbReference type="HAMAP-Rule" id="MF_00318"/>
    </source>
</evidence>
<name>ENO_RUMCH</name>
<sequence length="431" mass="46760">MKQYIPIESVFAREILDSRGNPTVEVEVIAEGGFIGRASVPSGASTGAFEAVELRDENSGRYMGKGVETAVDNVNNTIAPEVEGMNVFDQVAVDKLMIDLDGTPNKERLGANAILGVSLAVAKAAAEALGLGLYQYIGGVNAKTLPVPMMNIINGGKHADNSVNIQEFMIMPVGAENFKEALRMCAEVFHNLKKVLHSKGLSTAVGDEGGFAPNLETDEQAIQVILEAVEKAGYKPGNDFRIAIDAAATEMYQEDGSYFFWKSNIRKSKEEMVDYWADLAGKYPIISLEDGVSEEDWEGWKLLTERLGSKIQLVGDDLFVTNTKRLEKGIKQGVANSILIKVNQIGTLTETLDAIQMANRAGYTAVTSHRSGETEDATIADIAVATNSGQIKTGAPSRTDRVAKYNQLLRIEEELGEVAEFPGLKAWYNLK</sequence>
<dbReference type="EC" id="4.2.1.11" evidence="1"/>
<dbReference type="EMBL" id="CP001348">
    <property type="protein sequence ID" value="ACL76595.1"/>
    <property type="molecule type" value="Genomic_DNA"/>
</dbReference>
<dbReference type="RefSeq" id="WP_015925687.1">
    <property type="nucleotide sequence ID" value="NC_011898.1"/>
</dbReference>
<dbReference type="SMR" id="B8I4U1"/>
<dbReference type="STRING" id="394503.Ccel_2254"/>
<dbReference type="KEGG" id="cce:Ccel_2254"/>
<dbReference type="eggNOG" id="COG0148">
    <property type="taxonomic scope" value="Bacteria"/>
</dbReference>
<dbReference type="HOGENOM" id="CLU_031223_2_1_9"/>
<dbReference type="OrthoDB" id="9804716at2"/>
<dbReference type="UniPathway" id="UPA00109">
    <property type="reaction ID" value="UER00187"/>
</dbReference>
<dbReference type="Proteomes" id="UP000001349">
    <property type="component" value="Chromosome"/>
</dbReference>
<dbReference type="GO" id="GO:0009986">
    <property type="term" value="C:cell surface"/>
    <property type="evidence" value="ECO:0007669"/>
    <property type="project" value="UniProtKB-SubCell"/>
</dbReference>
<dbReference type="GO" id="GO:0005576">
    <property type="term" value="C:extracellular region"/>
    <property type="evidence" value="ECO:0007669"/>
    <property type="project" value="UniProtKB-SubCell"/>
</dbReference>
<dbReference type="GO" id="GO:0000015">
    <property type="term" value="C:phosphopyruvate hydratase complex"/>
    <property type="evidence" value="ECO:0007669"/>
    <property type="project" value="InterPro"/>
</dbReference>
<dbReference type="GO" id="GO:0000287">
    <property type="term" value="F:magnesium ion binding"/>
    <property type="evidence" value="ECO:0007669"/>
    <property type="project" value="UniProtKB-UniRule"/>
</dbReference>
<dbReference type="GO" id="GO:0004634">
    <property type="term" value="F:phosphopyruvate hydratase activity"/>
    <property type="evidence" value="ECO:0007669"/>
    <property type="project" value="UniProtKB-UniRule"/>
</dbReference>
<dbReference type="GO" id="GO:0006096">
    <property type="term" value="P:glycolytic process"/>
    <property type="evidence" value="ECO:0007669"/>
    <property type="project" value="UniProtKB-UniRule"/>
</dbReference>
<dbReference type="CDD" id="cd03313">
    <property type="entry name" value="enolase"/>
    <property type="match status" value="1"/>
</dbReference>
<dbReference type="FunFam" id="3.20.20.120:FF:000001">
    <property type="entry name" value="Enolase"/>
    <property type="match status" value="1"/>
</dbReference>
<dbReference type="FunFam" id="3.30.390.10:FF:000001">
    <property type="entry name" value="Enolase"/>
    <property type="match status" value="1"/>
</dbReference>
<dbReference type="Gene3D" id="3.20.20.120">
    <property type="entry name" value="Enolase-like C-terminal domain"/>
    <property type="match status" value="1"/>
</dbReference>
<dbReference type="Gene3D" id="3.30.390.10">
    <property type="entry name" value="Enolase-like, N-terminal domain"/>
    <property type="match status" value="1"/>
</dbReference>
<dbReference type="HAMAP" id="MF_00318">
    <property type="entry name" value="Enolase"/>
    <property type="match status" value="1"/>
</dbReference>
<dbReference type="InterPro" id="IPR000941">
    <property type="entry name" value="Enolase"/>
</dbReference>
<dbReference type="InterPro" id="IPR036849">
    <property type="entry name" value="Enolase-like_C_sf"/>
</dbReference>
<dbReference type="InterPro" id="IPR029017">
    <property type="entry name" value="Enolase-like_N"/>
</dbReference>
<dbReference type="InterPro" id="IPR020810">
    <property type="entry name" value="Enolase_C"/>
</dbReference>
<dbReference type="InterPro" id="IPR020809">
    <property type="entry name" value="Enolase_CS"/>
</dbReference>
<dbReference type="InterPro" id="IPR020811">
    <property type="entry name" value="Enolase_N"/>
</dbReference>
<dbReference type="NCBIfam" id="TIGR01060">
    <property type="entry name" value="eno"/>
    <property type="match status" value="1"/>
</dbReference>
<dbReference type="PANTHER" id="PTHR11902">
    <property type="entry name" value="ENOLASE"/>
    <property type="match status" value="1"/>
</dbReference>
<dbReference type="PANTHER" id="PTHR11902:SF1">
    <property type="entry name" value="ENOLASE"/>
    <property type="match status" value="1"/>
</dbReference>
<dbReference type="Pfam" id="PF00113">
    <property type="entry name" value="Enolase_C"/>
    <property type="match status" value="1"/>
</dbReference>
<dbReference type="Pfam" id="PF03952">
    <property type="entry name" value="Enolase_N"/>
    <property type="match status" value="1"/>
</dbReference>
<dbReference type="PIRSF" id="PIRSF001400">
    <property type="entry name" value="Enolase"/>
    <property type="match status" value="1"/>
</dbReference>
<dbReference type="PRINTS" id="PR00148">
    <property type="entry name" value="ENOLASE"/>
</dbReference>
<dbReference type="SFLD" id="SFLDS00001">
    <property type="entry name" value="Enolase"/>
    <property type="match status" value="1"/>
</dbReference>
<dbReference type="SFLD" id="SFLDF00002">
    <property type="entry name" value="enolase"/>
    <property type="match status" value="1"/>
</dbReference>
<dbReference type="SMART" id="SM01192">
    <property type="entry name" value="Enolase_C"/>
    <property type="match status" value="1"/>
</dbReference>
<dbReference type="SMART" id="SM01193">
    <property type="entry name" value="Enolase_N"/>
    <property type="match status" value="1"/>
</dbReference>
<dbReference type="SUPFAM" id="SSF51604">
    <property type="entry name" value="Enolase C-terminal domain-like"/>
    <property type="match status" value="1"/>
</dbReference>
<dbReference type="SUPFAM" id="SSF54826">
    <property type="entry name" value="Enolase N-terminal domain-like"/>
    <property type="match status" value="1"/>
</dbReference>
<dbReference type="PROSITE" id="PS00164">
    <property type="entry name" value="ENOLASE"/>
    <property type="match status" value="1"/>
</dbReference>
<reference key="1">
    <citation type="submission" date="2009-01" db="EMBL/GenBank/DDBJ databases">
        <title>Complete sequence of Clostridium cellulolyticum H10.</title>
        <authorList>
            <consortium name="US DOE Joint Genome Institute"/>
            <person name="Lucas S."/>
            <person name="Copeland A."/>
            <person name="Lapidus A."/>
            <person name="Glavina del Rio T."/>
            <person name="Dalin E."/>
            <person name="Tice H."/>
            <person name="Bruce D."/>
            <person name="Goodwin L."/>
            <person name="Pitluck S."/>
            <person name="Chertkov O."/>
            <person name="Saunders E."/>
            <person name="Brettin T."/>
            <person name="Detter J.C."/>
            <person name="Han C."/>
            <person name="Larimer F."/>
            <person name="Land M."/>
            <person name="Hauser L."/>
            <person name="Kyrpides N."/>
            <person name="Ivanova N."/>
            <person name="Zhou J."/>
            <person name="Richardson P."/>
        </authorList>
    </citation>
    <scope>NUCLEOTIDE SEQUENCE [LARGE SCALE GENOMIC DNA]</scope>
    <source>
        <strain>ATCC 35319 / DSM 5812 / JCM 6584 / H10</strain>
    </source>
</reference>
<gene>
    <name evidence="1" type="primary">eno</name>
    <name type="ordered locus">Ccel_2254</name>
</gene>
<feature type="chain" id="PRO_1000132995" description="Enolase">
    <location>
        <begin position="1"/>
        <end position="431"/>
    </location>
</feature>
<feature type="active site" description="Proton donor" evidence="1">
    <location>
        <position position="208"/>
    </location>
</feature>
<feature type="active site" description="Proton acceptor" evidence="1">
    <location>
        <position position="341"/>
    </location>
</feature>
<feature type="binding site" evidence="1">
    <location>
        <position position="166"/>
    </location>
    <ligand>
        <name>(2R)-2-phosphoglycerate</name>
        <dbReference type="ChEBI" id="CHEBI:58289"/>
    </ligand>
</feature>
<feature type="binding site" evidence="1">
    <location>
        <position position="245"/>
    </location>
    <ligand>
        <name>Mg(2+)</name>
        <dbReference type="ChEBI" id="CHEBI:18420"/>
    </ligand>
</feature>
<feature type="binding site" evidence="1">
    <location>
        <position position="289"/>
    </location>
    <ligand>
        <name>Mg(2+)</name>
        <dbReference type="ChEBI" id="CHEBI:18420"/>
    </ligand>
</feature>
<feature type="binding site" evidence="1">
    <location>
        <position position="316"/>
    </location>
    <ligand>
        <name>Mg(2+)</name>
        <dbReference type="ChEBI" id="CHEBI:18420"/>
    </ligand>
</feature>
<feature type="binding site" evidence="1">
    <location>
        <position position="341"/>
    </location>
    <ligand>
        <name>(2R)-2-phosphoglycerate</name>
        <dbReference type="ChEBI" id="CHEBI:58289"/>
    </ligand>
</feature>
<feature type="binding site" evidence="1">
    <location>
        <position position="370"/>
    </location>
    <ligand>
        <name>(2R)-2-phosphoglycerate</name>
        <dbReference type="ChEBI" id="CHEBI:58289"/>
    </ligand>
</feature>
<feature type="binding site" evidence="1">
    <location>
        <position position="371"/>
    </location>
    <ligand>
        <name>(2R)-2-phosphoglycerate</name>
        <dbReference type="ChEBI" id="CHEBI:58289"/>
    </ligand>
</feature>
<feature type="binding site" evidence="1">
    <location>
        <position position="392"/>
    </location>
    <ligand>
        <name>(2R)-2-phosphoglycerate</name>
        <dbReference type="ChEBI" id="CHEBI:58289"/>
    </ligand>
</feature>
<keyword id="KW-0963">Cytoplasm</keyword>
<keyword id="KW-0324">Glycolysis</keyword>
<keyword id="KW-0456">Lyase</keyword>
<keyword id="KW-0460">Magnesium</keyword>
<keyword id="KW-0479">Metal-binding</keyword>
<keyword id="KW-1185">Reference proteome</keyword>
<keyword id="KW-0964">Secreted</keyword>